<accession>P64009</accession>
<accession>Q8XEK2</accession>
<feature type="chain" id="PRO_0000182906" description="Deoxyuridine 5'-triphosphate nucleotidohydrolase">
    <location>
        <begin position="1"/>
        <end position="151"/>
    </location>
</feature>
<feature type="binding site" evidence="1">
    <location>
        <begin position="70"/>
        <end position="72"/>
    </location>
    <ligand>
        <name>substrate</name>
    </ligand>
</feature>
<feature type="binding site" evidence="1">
    <location>
        <position position="83"/>
    </location>
    <ligand>
        <name>substrate</name>
    </ligand>
</feature>
<feature type="binding site" evidence="1">
    <location>
        <begin position="87"/>
        <end position="89"/>
    </location>
    <ligand>
        <name>substrate</name>
    </ligand>
</feature>
<feature type="binding site" evidence="1">
    <location>
        <position position="97"/>
    </location>
    <ligand>
        <name>substrate</name>
    </ligand>
</feature>
<comment type="function">
    <text evidence="1">This enzyme is involved in nucleotide metabolism: it produces dUMP, the immediate precursor of thymidine nucleotides and it decreases the intracellular concentration of dUTP so that uracil cannot be incorporated into DNA.</text>
</comment>
<comment type="catalytic activity">
    <reaction evidence="1">
        <text>dUTP + H2O = dUMP + diphosphate + H(+)</text>
        <dbReference type="Rhea" id="RHEA:10248"/>
        <dbReference type="ChEBI" id="CHEBI:15377"/>
        <dbReference type="ChEBI" id="CHEBI:15378"/>
        <dbReference type="ChEBI" id="CHEBI:33019"/>
        <dbReference type="ChEBI" id="CHEBI:61555"/>
        <dbReference type="ChEBI" id="CHEBI:246422"/>
        <dbReference type="EC" id="3.6.1.23"/>
    </reaction>
</comment>
<comment type="cofactor">
    <cofactor evidence="1">
        <name>Mg(2+)</name>
        <dbReference type="ChEBI" id="CHEBI:18420"/>
    </cofactor>
</comment>
<comment type="pathway">
    <text evidence="1">Pyrimidine metabolism; dUMP biosynthesis; dUMP from dCTP (dUTP route): step 2/2.</text>
</comment>
<comment type="similarity">
    <text evidence="1">Belongs to the dUTPase family.</text>
</comment>
<evidence type="ECO:0000255" key="1">
    <source>
        <dbReference type="HAMAP-Rule" id="MF_00116"/>
    </source>
</evidence>
<protein>
    <recommendedName>
        <fullName evidence="1">Deoxyuridine 5'-triphosphate nucleotidohydrolase</fullName>
        <shortName evidence="1">dUTPase</shortName>
        <ecNumber evidence="1">3.6.1.23</ecNumber>
    </recommendedName>
    <alternativeName>
        <fullName evidence="1">dUTP pyrophosphatase</fullName>
    </alternativeName>
</protein>
<dbReference type="EC" id="3.6.1.23" evidence="1"/>
<dbReference type="EMBL" id="AL513382">
    <property type="protein sequence ID" value="CAD03262.1"/>
    <property type="molecule type" value="Genomic_DNA"/>
</dbReference>
<dbReference type="EMBL" id="AE014613">
    <property type="protein sequence ID" value="AAO71269.1"/>
    <property type="molecule type" value="Genomic_DNA"/>
</dbReference>
<dbReference type="RefSeq" id="NP_458195.1">
    <property type="nucleotide sequence ID" value="NC_003198.1"/>
</dbReference>
<dbReference type="SMR" id="P64009"/>
<dbReference type="STRING" id="220341.gene:17587906"/>
<dbReference type="KEGG" id="stt:t3787"/>
<dbReference type="KEGG" id="sty:STY4063"/>
<dbReference type="PATRIC" id="fig|220341.7.peg.4148"/>
<dbReference type="eggNOG" id="COG0756">
    <property type="taxonomic scope" value="Bacteria"/>
</dbReference>
<dbReference type="HOGENOM" id="CLU_068508_1_1_6"/>
<dbReference type="OMA" id="RSGMGHK"/>
<dbReference type="OrthoDB" id="9809956at2"/>
<dbReference type="UniPathway" id="UPA00610">
    <property type="reaction ID" value="UER00666"/>
</dbReference>
<dbReference type="Proteomes" id="UP000000541">
    <property type="component" value="Chromosome"/>
</dbReference>
<dbReference type="Proteomes" id="UP000002670">
    <property type="component" value="Chromosome"/>
</dbReference>
<dbReference type="GO" id="GO:0004170">
    <property type="term" value="F:dUTP diphosphatase activity"/>
    <property type="evidence" value="ECO:0007669"/>
    <property type="project" value="UniProtKB-UniRule"/>
</dbReference>
<dbReference type="GO" id="GO:0000287">
    <property type="term" value="F:magnesium ion binding"/>
    <property type="evidence" value="ECO:0007669"/>
    <property type="project" value="UniProtKB-UniRule"/>
</dbReference>
<dbReference type="GO" id="GO:0006226">
    <property type="term" value="P:dUMP biosynthetic process"/>
    <property type="evidence" value="ECO:0007669"/>
    <property type="project" value="UniProtKB-UniRule"/>
</dbReference>
<dbReference type="GO" id="GO:0046081">
    <property type="term" value="P:dUTP catabolic process"/>
    <property type="evidence" value="ECO:0007669"/>
    <property type="project" value="InterPro"/>
</dbReference>
<dbReference type="CDD" id="cd07557">
    <property type="entry name" value="trimeric_dUTPase"/>
    <property type="match status" value="1"/>
</dbReference>
<dbReference type="FunFam" id="2.70.40.10:FF:000002">
    <property type="entry name" value="dUTP diphosphatase"/>
    <property type="match status" value="1"/>
</dbReference>
<dbReference type="Gene3D" id="2.70.40.10">
    <property type="match status" value="1"/>
</dbReference>
<dbReference type="HAMAP" id="MF_00116">
    <property type="entry name" value="dUTPase_bact"/>
    <property type="match status" value="1"/>
</dbReference>
<dbReference type="InterPro" id="IPR008181">
    <property type="entry name" value="dUTPase"/>
</dbReference>
<dbReference type="InterPro" id="IPR029054">
    <property type="entry name" value="dUTPase-like"/>
</dbReference>
<dbReference type="InterPro" id="IPR036157">
    <property type="entry name" value="dUTPase-like_sf"/>
</dbReference>
<dbReference type="InterPro" id="IPR033704">
    <property type="entry name" value="dUTPase_trimeric"/>
</dbReference>
<dbReference type="NCBIfam" id="TIGR00576">
    <property type="entry name" value="dut"/>
    <property type="match status" value="1"/>
</dbReference>
<dbReference type="NCBIfam" id="NF001862">
    <property type="entry name" value="PRK00601.1"/>
    <property type="match status" value="1"/>
</dbReference>
<dbReference type="PANTHER" id="PTHR11241">
    <property type="entry name" value="DEOXYURIDINE 5'-TRIPHOSPHATE NUCLEOTIDOHYDROLASE"/>
    <property type="match status" value="1"/>
</dbReference>
<dbReference type="PANTHER" id="PTHR11241:SF0">
    <property type="entry name" value="DEOXYURIDINE 5'-TRIPHOSPHATE NUCLEOTIDOHYDROLASE"/>
    <property type="match status" value="1"/>
</dbReference>
<dbReference type="Pfam" id="PF00692">
    <property type="entry name" value="dUTPase"/>
    <property type="match status" value="1"/>
</dbReference>
<dbReference type="SUPFAM" id="SSF51283">
    <property type="entry name" value="dUTPase-like"/>
    <property type="match status" value="1"/>
</dbReference>
<organism>
    <name type="scientific">Salmonella typhi</name>
    <dbReference type="NCBI Taxonomy" id="90370"/>
    <lineage>
        <taxon>Bacteria</taxon>
        <taxon>Pseudomonadati</taxon>
        <taxon>Pseudomonadota</taxon>
        <taxon>Gammaproteobacteria</taxon>
        <taxon>Enterobacterales</taxon>
        <taxon>Enterobacteriaceae</taxon>
        <taxon>Salmonella</taxon>
    </lineage>
</organism>
<proteinExistence type="inferred from homology"/>
<reference key="1">
    <citation type="journal article" date="2001" name="Nature">
        <title>Complete genome sequence of a multiple drug resistant Salmonella enterica serovar Typhi CT18.</title>
        <authorList>
            <person name="Parkhill J."/>
            <person name="Dougan G."/>
            <person name="James K.D."/>
            <person name="Thomson N.R."/>
            <person name="Pickard D."/>
            <person name="Wain J."/>
            <person name="Churcher C.M."/>
            <person name="Mungall K.L."/>
            <person name="Bentley S.D."/>
            <person name="Holden M.T.G."/>
            <person name="Sebaihia M."/>
            <person name="Baker S."/>
            <person name="Basham D."/>
            <person name="Brooks K."/>
            <person name="Chillingworth T."/>
            <person name="Connerton P."/>
            <person name="Cronin A."/>
            <person name="Davis P."/>
            <person name="Davies R.M."/>
            <person name="Dowd L."/>
            <person name="White N."/>
            <person name="Farrar J."/>
            <person name="Feltwell T."/>
            <person name="Hamlin N."/>
            <person name="Haque A."/>
            <person name="Hien T.T."/>
            <person name="Holroyd S."/>
            <person name="Jagels K."/>
            <person name="Krogh A."/>
            <person name="Larsen T.S."/>
            <person name="Leather S."/>
            <person name="Moule S."/>
            <person name="O'Gaora P."/>
            <person name="Parry C."/>
            <person name="Quail M.A."/>
            <person name="Rutherford K.M."/>
            <person name="Simmonds M."/>
            <person name="Skelton J."/>
            <person name="Stevens K."/>
            <person name="Whitehead S."/>
            <person name="Barrell B.G."/>
        </authorList>
    </citation>
    <scope>NUCLEOTIDE SEQUENCE [LARGE SCALE GENOMIC DNA]</scope>
    <source>
        <strain>CT18</strain>
    </source>
</reference>
<reference key="2">
    <citation type="journal article" date="2003" name="J. Bacteriol.">
        <title>Comparative genomics of Salmonella enterica serovar Typhi strains Ty2 and CT18.</title>
        <authorList>
            <person name="Deng W."/>
            <person name="Liou S.-R."/>
            <person name="Plunkett G. III"/>
            <person name="Mayhew G.F."/>
            <person name="Rose D.J."/>
            <person name="Burland V."/>
            <person name="Kodoyianni V."/>
            <person name="Schwartz D.C."/>
            <person name="Blattner F.R."/>
        </authorList>
    </citation>
    <scope>NUCLEOTIDE SEQUENCE [LARGE SCALE GENOMIC DNA]</scope>
    <source>
        <strain>ATCC 700931 / Ty2</strain>
    </source>
</reference>
<name>DUT_SALTI</name>
<sequence length="151" mass="16036">MKKIDVKILDPRVGQQFPLPTYATSGSAGLDLRACLDDAVELAPGATTLVPTGLAIHIADPSLAAVMLPRSGLGHKHGIVLGNLVGLIDSDYQGQLMVSIWNRGQDSFTIEPGERIAQMVFVPVVQAEFNLVEAFDATERGEGGFGHSGRK</sequence>
<gene>
    <name evidence="1" type="primary">dut</name>
    <name type="ordered locus">STY4063</name>
    <name type="ordered locus">t3787</name>
</gene>
<keyword id="KW-0378">Hydrolase</keyword>
<keyword id="KW-0460">Magnesium</keyword>
<keyword id="KW-0479">Metal-binding</keyword>
<keyword id="KW-0546">Nucleotide metabolism</keyword>